<feature type="chain" id="PRO_0000125469" description="Envelope glycoprotein gp130">
    <location>
        <begin position="1"/>
        <end position="989"/>
    </location>
</feature>
<feature type="chain" id="PRO_0000245431" description="Leader peptide" evidence="1">
    <location>
        <begin position="1"/>
        <end position="126"/>
    </location>
</feature>
<feature type="chain" id="PRO_0000245432" description="Surface protein" evidence="1">
    <location>
        <begin position="127"/>
        <end position="572"/>
    </location>
</feature>
<feature type="chain" id="PRO_0000245433" description="Transmembrane protein" evidence="1">
    <location>
        <begin position="573"/>
        <end position="989"/>
    </location>
</feature>
<feature type="topological domain" description="Cytoplasmic" evidence="2">
    <location>
        <begin position="1"/>
        <end position="65"/>
    </location>
</feature>
<feature type="transmembrane region" description="Helical; Signal-anchor for type III membrane protein" evidence="2">
    <location>
        <begin position="66"/>
        <end position="88"/>
    </location>
</feature>
<feature type="topological domain" description="Lumenal" evidence="2">
    <location>
        <begin position="89"/>
        <end position="961"/>
    </location>
</feature>
<feature type="transmembrane region" description="Helical" evidence="2">
    <location>
        <begin position="962"/>
        <end position="982"/>
    </location>
</feature>
<feature type="topological domain" description="Cytoplasmic" evidence="2">
    <location>
        <begin position="983"/>
        <end position="989"/>
    </location>
</feature>
<feature type="region of interest" description="Involved in virion budding" evidence="2">
    <location>
        <begin position="1"/>
        <end position="15"/>
    </location>
</feature>
<feature type="region of interest" description="Fusion peptide" evidence="1">
    <location>
        <begin position="577"/>
        <end position="599"/>
    </location>
</feature>
<feature type="short sequence motif" description="Endoplasmic reticulum retention signal" evidence="1">
    <location>
        <begin position="985"/>
        <end position="987"/>
    </location>
</feature>
<feature type="site" description="Cleavage; by host" evidence="1">
    <location>
        <begin position="126"/>
        <end position="127"/>
    </location>
</feature>
<feature type="site" description="Cleavage; by host" evidence="1">
    <location>
        <begin position="572"/>
        <end position="573"/>
    </location>
</feature>
<feature type="glycosylation site" description="N-linked (GlcNAc...) asparagine; by host" evidence="2">
    <location>
        <position position="109"/>
    </location>
</feature>
<feature type="glycosylation site" description="N-linked (GlcNAc...) asparagine; by host" evidence="2">
    <location>
        <position position="141"/>
    </location>
</feature>
<feature type="glycosylation site" description="N-linked (GlcNAc...) asparagine; by host" evidence="2">
    <location>
        <position position="183"/>
    </location>
</feature>
<feature type="glycosylation site" description="N-linked (GlcNAc...) asparagine; by host" evidence="2">
    <location>
        <position position="309"/>
    </location>
</feature>
<feature type="glycosylation site" description="N-linked (GlcNAc...) asparagine; by host" evidence="2">
    <location>
        <position position="351"/>
    </location>
</feature>
<feature type="glycosylation site" description="N-linked (GlcNAc...) asparagine; by host" evidence="2">
    <location>
        <position position="392"/>
    </location>
</feature>
<feature type="glycosylation site" description="N-linked (GlcNAc...) asparagine; by host" evidence="2">
    <location>
        <position position="411"/>
    </location>
</feature>
<feature type="glycosylation site" description="N-linked (GlcNAc...) asparagine; by host" evidence="2">
    <location>
        <position position="424"/>
    </location>
</feature>
<feature type="glycosylation site" description="N-linked (GlcNAc...) asparagine; by host" evidence="2">
    <location>
        <position position="490"/>
    </location>
</feature>
<feature type="glycosylation site" description="N-linked (GlcNAc...) asparagine; by host" evidence="2">
    <location>
        <position position="509"/>
    </location>
</feature>
<feature type="glycosylation site" description="N-linked (GlcNAc...) asparagine; by host" evidence="2">
    <location>
        <position position="528"/>
    </location>
</feature>
<feature type="glycosylation site" description="N-linked (GlcNAc...) asparagine; by host" evidence="2">
    <location>
        <position position="557"/>
    </location>
</feature>
<feature type="glycosylation site" description="N-linked (GlcNAc...) asparagine; by host" evidence="2">
    <location>
        <position position="783"/>
    </location>
</feature>
<feature type="glycosylation site" description="N-linked (GlcNAc...) asparagine; by host" evidence="2">
    <location>
        <position position="809"/>
    </location>
</feature>
<feature type="glycosylation site" description="N-linked (GlcNAc...) asparagine; by host" evidence="2">
    <location>
        <position position="834"/>
    </location>
</feature>
<feature type="cross-link" description="Glycyl lysine isopeptide (Lys-Gly) (interchain with G-Cter in ubiquitin)" evidence="1">
    <location>
        <position position="14"/>
    </location>
</feature>
<feature type="cross-link" description="Glycyl lysine isopeptide (Lys-Gly) (interchain with G-Cter in ubiquitin)" evidence="1">
    <location>
        <position position="15"/>
    </location>
</feature>
<feature type="cross-link" description="Glycyl lysine isopeptide (Lys-Gly) (interchain with G-Cter in ubiquitin)" evidence="1">
    <location>
        <position position="34"/>
    </location>
</feature>
<feature type="cross-link" description="Glycyl lysine isopeptide (Lys-Gly) (interchain with G-Cter in ubiquitin)" evidence="1">
    <location>
        <position position="53"/>
    </location>
</feature>
<feature type="sequence conflict" description="In Ref. 2; AAA47794." evidence="3" ref="2">
    <original>I</original>
    <variation>V</variation>
    <location>
        <position position="164"/>
    </location>
</feature>
<feature type="sequence conflict" description="In Ref. 2; AAA47794." evidence="3" ref="2">
    <original>M</original>
    <variation>I</variation>
    <location>
        <position position="171"/>
    </location>
</feature>
<feature type="sequence conflict" description="In Ref. 2; AAA47794." evidence="3" ref="2">
    <original>R</original>
    <variation>Q</variation>
    <location>
        <position position="342"/>
    </location>
</feature>
<feature type="sequence conflict" description="In Ref. 2; AAA47794." evidence="3" ref="2">
    <original>K</original>
    <variation>E</variation>
    <location>
        <position position="499"/>
    </location>
</feature>
<feature type="sequence conflict" description="In Ref. 2; AAA47794." evidence="3" ref="2">
    <original>M</original>
    <variation>I</variation>
    <location>
        <position position="650"/>
    </location>
</feature>
<feature type="sequence conflict" description="In Ref. 2; AAA47794." evidence="3" ref="2">
    <original>T</original>
    <variation>A</variation>
    <location>
        <position position="793"/>
    </location>
</feature>
<feature type="sequence conflict" description="In Ref. 2; AAA47794." evidence="3" ref="2">
    <original>F</original>
    <variation>S</variation>
    <location>
        <position position="957"/>
    </location>
</feature>
<feature type="sequence conflict" description="In Ref. 2; AAA47794." evidence="3" ref="2">
    <original>P</original>
    <variation>L</variation>
    <location>
        <position position="986"/>
    </location>
</feature>
<proteinExistence type="inferred from homology"/>
<gene>
    <name type="primary">env</name>
</gene>
<organism>
    <name type="scientific">Simian foamy virus type 1</name>
    <name type="common">SFVmac</name>
    <name type="synonym">SFV-1</name>
    <dbReference type="NCBI Taxonomy" id="338478"/>
    <lineage>
        <taxon>Viruses</taxon>
        <taxon>Riboviria</taxon>
        <taxon>Pararnavirae</taxon>
        <taxon>Artverviricota</taxon>
        <taxon>Revtraviricetes</taxon>
        <taxon>Ortervirales</taxon>
        <taxon>Retroviridae</taxon>
        <taxon>Spumaretrovirinae</taxon>
        <taxon>Spumavirus</taxon>
    </lineage>
</organism>
<dbReference type="EMBL" id="X54482">
    <property type="status" value="NOT_ANNOTATED_CDS"/>
    <property type="molecule type" value="Genomic_DNA"/>
</dbReference>
<dbReference type="EMBL" id="M33561">
    <property type="protein sequence ID" value="AAA47794.1"/>
    <property type="status" value="ALT_INIT"/>
    <property type="molecule type" value="Genomic_RNA"/>
</dbReference>
<dbReference type="PIR" id="B33562">
    <property type="entry name" value="VCLJSF"/>
</dbReference>
<dbReference type="PIR" id="S18739">
    <property type="entry name" value="S18739"/>
</dbReference>
<dbReference type="RefSeq" id="YP_001961123.1">
    <property type="nucleotide sequence ID" value="NC_010819.1"/>
</dbReference>
<dbReference type="SMR" id="P23073"/>
<dbReference type="GlyCosmos" id="P23073">
    <property type="glycosylation" value="15 sites, No reported glycans"/>
</dbReference>
<dbReference type="Proteomes" id="UP000007216">
    <property type="component" value="Segment"/>
</dbReference>
<dbReference type="GO" id="GO:0044167">
    <property type="term" value="C:host cell endoplasmic reticulum membrane"/>
    <property type="evidence" value="ECO:0007669"/>
    <property type="project" value="UniProtKB-SubCell"/>
</dbReference>
<dbReference type="GO" id="GO:0016020">
    <property type="term" value="C:membrane"/>
    <property type="evidence" value="ECO:0007669"/>
    <property type="project" value="UniProtKB-KW"/>
</dbReference>
<dbReference type="GO" id="GO:0019031">
    <property type="term" value="C:viral envelope"/>
    <property type="evidence" value="ECO:0007669"/>
    <property type="project" value="UniProtKB-KW"/>
</dbReference>
<dbReference type="GO" id="GO:0055036">
    <property type="term" value="C:virion membrane"/>
    <property type="evidence" value="ECO:0007669"/>
    <property type="project" value="UniProtKB-SubCell"/>
</dbReference>
<dbReference type="InterPro" id="IPR005070">
    <property type="entry name" value="Foamy_env"/>
</dbReference>
<dbReference type="Pfam" id="PF03408">
    <property type="entry name" value="Foamy_virus_ENV"/>
    <property type="match status" value="1"/>
</dbReference>
<protein>
    <recommendedName>
        <fullName>Envelope glycoprotein gp130</fullName>
    </recommendedName>
    <alternativeName>
        <fullName>Env polyprotein</fullName>
    </alternativeName>
    <component>
        <recommendedName>
            <fullName>Leader peptide</fullName>
            <shortName>LP</shortName>
        </recommendedName>
        <alternativeName>
            <fullName>Env leader protein</fullName>
            <shortName>Elp</shortName>
        </alternativeName>
        <alternativeName>
            <fullName>gp18LP</fullName>
        </alternativeName>
    </component>
    <component>
        <recommendedName>
            <fullName>Surface protein</fullName>
            <shortName>SU</shortName>
        </recommendedName>
        <alternativeName>
            <fullName>Glycoprotein 80</fullName>
            <shortName>gp80</shortName>
        </alternativeName>
    </component>
    <component>
        <recommendedName>
            <fullName>Transmembrane protein</fullName>
            <shortName>TM</shortName>
        </recommendedName>
        <alternativeName>
            <fullName>Glycoprotein 48</fullName>
            <shortName>gp48</shortName>
        </alternativeName>
    </component>
</protein>
<reference key="1">
    <citation type="journal article" date="1991" name="Gene">
        <title>Sequence analysis of the simian foamy virus type 1 genome.</title>
        <authorList>
            <person name="Kupiec J.-J."/>
            <person name="Kay A."/>
            <person name="Hayat M."/>
            <person name="Ravier R."/>
            <person name="Peries J."/>
            <person name="Galibert F."/>
        </authorList>
    </citation>
    <scope>NUCLEOTIDE SEQUENCE [GENOMIC DNA]</scope>
</reference>
<reference key="2">
    <citation type="journal article" date="1990" name="J. Virol.">
        <title>Relationship of the env genes and the endonuclease domain of the pol genes of simian foamy virus type 1 and human foamy virus.</title>
        <authorList>
            <person name="Mergia A."/>
            <person name="Shaw K.E.S."/>
            <person name="Lackner J.E."/>
            <person name="Luciw P.A."/>
        </authorList>
    </citation>
    <scope>NUCLEOTIDE SEQUENCE [GENOMIC RNA]</scope>
</reference>
<reference key="3">
    <citation type="journal article" date="2004" name="Curr. Opin. Microbiol.">
        <title>Foamy viruses-a world apart.</title>
        <authorList>
            <person name="Delelis O."/>
            <person name="Lehmann-Che J."/>
            <person name="Saib A."/>
        </authorList>
    </citation>
    <scope>REVIEW</scope>
</reference>
<evidence type="ECO:0000250" key="1"/>
<evidence type="ECO:0000255" key="2"/>
<evidence type="ECO:0000305" key="3"/>
<comment type="function">
    <text evidence="1">The surface protein (SU) attaches the virus to the host cell by binding to the cell receptor. This interaction triggers the refolding of transmembrane protein (TM) and is thought to activate its fusogenic potential by unmasking its fusion peptide (By similarity).</text>
</comment>
<comment type="function">
    <text evidence="1">The transmembrane protein (TM) acts as a class I viral fusion protein. Under the current model, the protein has at least 3 conformational states: pre-fusion native state, pre-hairpin intermediate state, and post-fusion hairpin state. During viral and target cell membrane fusion, the coiled coil regions (heptad repeats) assume a trimer-of-hairpins structure, positioning the fusion peptide in close proximity to the C-terminal region of the ectodomain. The formation of this structure appears to drive apposition and subsequent fusion of viral and target cell membranes. Membranes fusion leads to delivery of the nucleocapsid into the cytoplasm (By similarity).</text>
</comment>
<comment type="function">
    <text evidence="1">The leader peptide is a component of released, infectious virions and is required for particle budding.</text>
</comment>
<comment type="subunit">
    <text evidence="1">The mature envelope protein consists of a trimer of SU-TM heterodimers. The N-terminus of leader peptide specifically interacts with Gag protein. This specific interaction between Gag protein and Env glycoprotein may allow particle egress (By similarity).</text>
</comment>
<comment type="subcellular location">
    <molecule>Envelope glycoprotein gp130</molecule>
    <subcellularLocation>
        <location>Host endoplasmic reticulum membrane</location>
    </subcellularLocation>
    <text evidence="1">The polyprotein has a highly unusual biosynthesis for a retroviral glycoprotein. It is translated as a full-length precursor protein into the rough endoplasmic reticulum and initially has a type III protein configuration with both its N and C-termini located intracytoplasmically (By similarity).</text>
</comment>
<comment type="subcellular location">
    <molecule>Leader peptide</molecule>
    <subcellularLocation>
        <location evidence="1">Virion membrane</location>
        <topology evidence="1">Single-pass type II membrane protein</topology>
    </subcellularLocation>
    <subcellularLocation>
        <location evidence="1">Host endoplasmic reticulum membrane</location>
        <topology evidence="1">Single-pass type II membrane protein</topology>
    </subcellularLocation>
    <text evidence="1">Its N-terminus is located inside the viral particle.</text>
</comment>
<comment type="subcellular location">
    <molecule>Transmembrane protein</molecule>
    <subcellularLocation>
        <location evidence="1">Virion membrane</location>
        <topology evidence="1">Single-pass type I membrane protein</topology>
    </subcellularLocation>
    <subcellularLocation>
        <location evidence="1">Host endoplasmic reticulum membrane</location>
        <topology evidence="1">Single-pass type I membrane protein</topology>
    </subcellularLocation>
</comment>
<comment type="subcellular location">
    <molecule>Surface protein</molecule>
    <subcellularLocation>
        <location evidence="1">Virion membrane</location>
        <topology evidence="1">Peripheral membrane protein</topology>
    </subcellularLocation>
    <subcellularLocation>
        <location evidence="1">Host endoplasmic reticulum membrane</location>
        <topology evidence="1">Peripheral membrane protein</topology>
    </subcellularLocation>
    <text evidence="1">The surface protein is not anchored to the viral envelope, but associates with the extravirion surface through its binding to TM.</text>
</comment>
<comment type="domain">
    <text evidence="1">The ER retention signal plays an important role in establishing the intracellular site of budding.</text>
</comment>
<comment type="PTM">
    <text evidence="1">Envelope glycoproteins are synthesized as an inactive precursor that is processed by host furin or a furin-like protease to yield a functional hetero-oligomeric complex.</text>
</comment>
<comment type="PTM">
    <text evidence="1">The transmembrane protein and the surface protein are N-glycosylated.</text>
</comment>
<comment type="PTM">
    <text evidence="1">Mono- and polyubiquitinated leader peptide are found in viral particles. Ubiquitination may be involved in regulating the balance between viral and subviral particles release (By similarity).</text>
</comment>
<comment type="miscellaneous">
    <text>Foamy viruses are distinct from other retroviruses in many respects. Their protease is active as an uncleaved Pro-Pol protein. Mature particles do not include the usual processed retroviral structural protein (MA, CA and NC), but instead contain two large Gag proteins. Their functional nucleic acid appears to be either RNA or dsDNA (up to 20% of extracellular particles), because they probably proceed either to an early (before integration) or late reverse transcription (after assembly). Foamy viruses have the ability to retrotranspose intracellularly with high efficiency. They bud predominantly into the endoplasmic reticulum (ER) and occasionally at the plasma membrane. Budding requires the presence of Env proteins. Most viral particles probably remain within the infected cell.</text>
</comment>
<comment type="sequence caution" evidence="3">
    <conflict type="erroneous initiation">
        <sequence resource="EMBL-CDS" id="AAA47794"/>
    </conflict>
</comment>
<organismHost>
    <name type="scientific">Homo sapiens</name>
    <name type="common">Human</name>
    <dbReference type="NCBI Taxonomy" id="9606"/>
</organismHost>
<organismHost>
    <name type="scientific">Macaca</name>
    <name type="common">macaques</name>
    <dbReference type="NCBI Taxonomy" id="9539"/>
</organismHost>
<keyword id="KW-0165">Cleavage on pair of basic residues</keyword>
<keyword id="KW-0325">Glycoprotein</keyword>
<keyword id="KW-1038">Host endoplasmic reticulum</keyword>
<keyword id="KW-1043">Host membrane</keyword>
<keyword id="KW-1017">Isopeptide bond</keyword>
<keyword id="KW-0472">Membrane</keyword>
<keyword id="KW-0735">Signal-anchor</keyword>
<keyword id="KW-0812">Transmembrane</keyword>
<keyword id="KW-1133">Transmembrane helix</keyword>
<keyword id="KW-0832">Ubl conjugation</keyword>
<keyword id="KW-0261">Viral envelope protein</keyword>
<keyword id="KW-0946">Virion</keyword>
<accession>P23073</accession>
<sequence>MAPPMTLEQWLLWKKMSQAHQALENVTTLTEEQKQQVIIDIQHEDVVPTRMDKLKYLAYSCCATSTRVLCWIVLVCVLLLVVFISCFVTMSRIQWNKDIAVFGPVIDWNVSQQAVIQQIRAKRLARSIRVEHATETYVEVNMTSIPQGVLYVPHPEPIILKERILGLSQVMMINSENIANTANLTQETKVLLADMINEEMNDLANQMIDFEIPLGDPRDQKQYQHQKCFQEFAHCYLVKYKTTKGWPSSTVIADQCPLPGNHPTVQYAHQNIWDYYVPFEQIRPEGWNSKSYYEDARIGGFYIPKWLRNNSYTHVLFCSDQIYGKWYNIDLTAQERENLLVRKLINLAKGNSSQLKDRAMPAEWDKQGKADLFRQINTLDVCNRPEMVFLLNSSYYEFSLWEGDCGFTRQNVTQANSLCKDFYNNSKWQKLHPYSCRFWRYKQEKEETKCSNGEKKKCLYYPQWDTPEALYDFGFLAYLNSFPSPICIKNQTIREPEYKISSLYLECMNASDRHGIDSALLALKTFLNFTGQSVNEMPLARAFVGLTDPKFPPTYPNITRESSGCNNNKRKRRSVNNYERLRSMGYALTGAVQTLSQISDINDERLQHGVYLLRDHVVTLMEAALHDVSIMEGMLAIQHVHTHLNHLKTMLLMRKIDWTFIRSDWIQQQLQKTDDEMKLIRRTARSLVYYVTQTSSSPTATSWEIGIYYEIVIPKHIYLNNWQVINVGHLLESAGHLTHVKVKHPYEIINKECSDTQYLHLEECIREDYVICDIVQIVQPCGNATELSDCPVTALKVKTPYIQVSPLKNGSYLVLSSTKDCSIPAYVPSVVTVNETVKCFGVEFHKPLYAETKTSYEPQVPHLKLRLPHLTGIIASLQSLEIEVTSTQENIKDQIERAKAQLLRLDIHEGDFPDWLKQVASATRDVWPAAASFIQGVGNFLSNTAQGIFGSAVSLLFYAKPILIGIGVILLIALLFKIISWLPGKPKKN</sequence>
<name>ENV_SFV1</name>